<dbReference type="EMBL" id="AJ235271">
    <property type="protein sequence ID" value="CAA14759.1"/>
    <property type="molecule type" value="Genomic_DNA"/>
</dbReference>
<dbReference type="PIR" id="E71685">
    <property type="entry name" value="E71685"/>
</dbReference>
<dbReference type="RefSeq" id="NP_220682.1">
    <property type="nucleotide sequence ID" value="NC_000963.1"/>
</dbReference>
<dbReference type="SMR" id="Q9ZDM9"/>
<dbReference type="STRING" id="272947.gene:17555379"/>
<dbReference type="EnsemblBacteria" id="CAA14759">
    <property type="protein sequence ID" value="CAA14759"/>
    <property type="gene ID" value="CAA14759"/>
</dbReference>
<dbReference type="KEGG" id="rpr:RP298"/>
<dbReference type="PATRIC" id="fig|272947.5.peg.307"/>
<dbReference type="eggNOG" id="COG0249">
    <property type="taxonomic scope" value="Bacteria"/>
</dbReference>
<dbReference type="HOGENOM" id="CLU_002472_4_0_5"/>
<dbReference type="OrthoDB" id="9802448at2"/>
<dbReference type="Proteomes" id="UP000002480">
    <property type="component" value="Chromosome"/>
</dbReference>
<dbReference type="GO" id="GO:0005524">
    <property type="term" value="F:ATP binding"/>
    <property type="evidence" value="ECO:0007669"/>
    <property type="project" value="UniProtKB-UniRule"/>
</dbReference>
<dbReference type="GO" id="GO:0140664">
    <property type="term" value="F:ATP-dependent DNA damage sensor activity"/>
    <property type="evidence" value="ECO:0007669"/>
    <property type="project" value="InterPro"/>
</dbReference>
<dbReference type="GO" id="GO:0003684">
    <property type="term" value="F:damaged DNA binding"/>
    <property type="evidence" value="ECO:0007669"/>
    <property type="project" value="UniProtKB-UniRule"/>
</dbReference>
<dbReference type="GO" id="GO:0030983">
    <property type="term" value="F:mismatched DNA binding"/>
    <property type="evidence" value="ECO:0007669"/>
    <property type="project" value="InterPro"/>
</dbReference>
<dbReference type="GO" id="GO:0006298">
    <property type="term" value="P:mismatch repair"/>
    <property type="evidence" value="ECO:0007669"/>
    <property type="project" value="UniProtKB-UniRule"/>
</dbReference>
<dbReference type="CDD" id="cd03284">
    <property type="entry name" value="ABC_MutS1"/>
    <property type="match status" value="1"/>
</dbReference>
<dbReference type="FunFam" id="3.40.1170.10:FF:000001">
    <property type="entry name" value="DNA mismatch repair protein MutS"/>
    <property type="match status" value="1"/>
</dbReference>
<dbReference type="FunFam" id="3.40.50.300:FF:000870">
    <property type="entry name" value="MutS protein homolog 4"/>
    <property type="match status" value="1"/>
</dbReference>
<dbReference type="Gene3D" id="1.10.1420.10">
    <property type="match status" value="2"/>
</dbReference>
<dbReference type="Gene3D" id="6.10.140.430">
    <property type="match status" value="1"/>
</dbReference>
<dbReference type="Gene3D" id="3.40.1170.10">
    <property type="entry name" value="DNA repair protein MutS, domain I"/>
    <property type="match status" value="1"/>
</dbReference>
<dbReference type="Gene3D" id="3.30.420.110">
    <property type="entry name" value="MutS, connector domain"/>
    <property type="match status" value="1"/>
</dbReference>
<dbReference type="Gene3D" id="3.40.50.300">
    <property type="entry name" value="P-loop containing nucleotide triphosphate hydrolases"/>
    <property type="match status" value="1"/>
</dbReference>
<dbReference type="HAMAP" id="MF_00096">
    <property type="entry name" value="MutS"/>
    <property type="match status" value="1"/>
</dbReference>
<dbReference type="InterPro" id="IPR005748">
    <property type="entry name" value="DNA_mismatch_repair_MutS"/>
</dbReference>
<dbReference type="InterPro" id="IPR007695">
    <property type="entry name" value="DNA_mismatch_repair_MutS-lik_N"/>
</dbReference>
<dbReference type="InterPro" id="IPR017261">
    <property type="entry name" value="DNA_mismatch_repair_MutS/MSH"/>
</dbReference>
<dbReference type="InterPro" id="IPR000432">
    <property type="entry name" value="DNA_mismatch_repair_MutS_C"/>
</dbReference>
<dbReference type="InterPro" id="IPR007861">
    <property type="entry name" value="DNA_mismatch_repair_MutS_clamp"/>
</dbReference>
<dbReference type="InterPro" id="IPR007696">
    <property type="entry name" value="DNA_mismatch_repair_MutS_core"/>
</dbReference>
<dbReference type="InterPro" id="IPR016151">
    <property type="entry name" value="DNA_mismatch_repair_MutS_N"/>
</dbReference>
<dbReference type="InterPro" id="IPR036187">
    <property type="entry name" value="DNA_mismatch_repair_MutS_sf"/>
</dbReference>
<dbReference type="InterPro" id="IPR007860">
    <property type="entry name" value="DNA_mmatch_repair_MutS_con_dom"/>
</dbReference>
<dbReference type="InterPro" id="IPR045076">
    <property type="entry name" value="MutS"/>
</dbReference>
<dbReference type="InterPro" id="IPR036678">
    <property type="entry name" value="MutS_con_dom_sf"/>
</dbReference>
<dbReference type="InterPro" id="IPR027417">
    <property type="entry name" value="P-loop_NTPase"/>
</dbReference>
<dbReference type="NCBIfam" id="TIGR01070">
    <property type="entry name" value="mutS1"/>
    <property type="match status" value="1"/>
</dbReference>
<dbReference type="NCBIfam" id="NF003810">
    <property type="entry name" value="PRK05399.1"/>
    <property type="match status" value="1"/>
</dbReference>
<dbReference type="PANTHER" id="PTHR11361:SF34">
    <property type="entry name" value="DNA MISMATCH REPAIR PROTEIN MSH1, MITOCHONDRIAL"/>
    <property type="match status" value="1"/>
</dbReference>
<dbReference type="PANTHER" id="PTHR11361">
    <property type="entry name" value="DNA MISMATCH REPAIR PROTEIN MUTS FAMILY MEMBER"/>
    <property type="match status" value="1"/>
</dbReference>
<dbReference type="Pfam" id="PF01624">
    <property type="entry name" value="MutS_I"/>
    <property type="match status" value="1"/>
</dbReference>
<dbReference type="Pfam" id="PF05188">
    <property type="entry name" value="MutS_II"/>
    <property type="match status" value="1"/>
</dbReference>
<dbReference type="Pfam" id="PF05192">
    <property type="entry name" value="MutS_III"/>
    <property type="match status" value="1"/>
</dbReference>
<dbReference type="Pfam" id="PF05190">
    <property type="entry name" value="MutS_IV"/>
    <property type="match status" value="1"/>
</dbReference>
<dbReference type="Pfam" id="PF00488">
    <property type="entry name" value="MutS_V"/>
    <property type="match status" value="1"/>
</dbReference>
<dbReference type="PIRSF" id="PIRSF037677">
    <property type="entry name" value="DNA_mis_repair_Msh6"/>
    <property type="match status" value="1"/>
</dbReference>
<dbReference type="SMART" id="SM00534">
    <property type="entry name" value="MUTSac"/>
    <property type="match status" value="1"/>
</dbReference>
<dbReference type="SMART" id="SM00533">
    <property type="entry name" value="MUTSd"/>
    <property type="match status" value="1"/>
</dbReference>
<dbReference type="SUPFAM" id="SSF55271">
    <property type="entry name" value="DNA repair protein MutS, domain I"/>
    <property type="match status" value="1"/>
</dbReference>
<dbReference type="SUPFAM" id="SSF53150">
    <property type="entry name" value="DNA repair protein MutS, domain II"/>
    <property type="match status" value="1"/>
</dbReference>
<dbReference type="SUPFAM" id="SSF48334">
    <property type="entry name" value="DNA repair protein MutS, domain III"/>
    <property type="match status" value="1"/>
</dbReference>
<dbReference type="SUPFAM" id="SSF52540">
    <property type="entry name" value="P-loop containing nucleoside triphosphate hydrolases"/>
    <property type="match status" value="1"/>
</dbReference>
<dbReference type="PROSITE" id="PS00486">
    <property type="entry name" value="DNA_MISMATCH_REPAIR_2"/>
    <property type="match status" value="1"/>
</dbReference>
<reference key="1">
    <citation type="journal article" date="1998" name="Nature">
        <title>The genome sequence of Rickettsia prowazekii and the origin of mitochondria.</title>
        <authorList>
            <person name="Andersson S.G.E."/>
            <person name="Zomorodipour A."/>
            <person name="Andersson J.O."/>
            <person name="Sicheritz-Ponten T."/>
            <person name="Alsmark U.C.M."/>
            <person name="Podowski R.M."/>
            <person name="Naeslund A.K."/>
            <person name="Eriksson A.-S."/>
            <person name="Winkler H.H."/>
            <person name="Kurland C.G."/>
        </authorList>
    </citation>
    <scope>NUCLEOTIDE SEQUENCE [LARGE SCALE GENOMIC DNA]</scope>
    <source>
        <strain>Madrid E</strain>
    </source>
</reference>
<gene>
    <name type="primary">mutS</name>
    <name type="ordered locus">RP298</name>
</gene>
<sequence>MTLCNMNLHEFRQKYNYNVATKMMQQYLDIKFAHLDCLLLFRMGDFYELFYEDAILASNILGIALTKRGKNCEEEIPMCGVPYHALEHYLTKLIEENYKVAICDQLETPEEAKKRDGYKAVVTRDVTRIITPGTIIEENLISVTEPNYLTSLVIPKNKKTASICCVDLSTSKIFVINVPETEILNELARLKSREILLSENLKSSNISDSILKQFNCRITYQVDSFFAINKCEKIILDFYKIRDIKGIGEISNSQICAIGSILEYLSLTQKQNIPHLPIPKIINFHNYMTIDFSTRRNLEIVTNLQGNLYGSVLNTLNHTVTTQGGRLLYHFLSSPLTNIAKINHRLNITEFFYSNLGIVTRIRELLKNTSDIERCLTRITMNRSSGRDLLSIKYTLETAKTIKGLFSESYGLNLPHFIEKIIKPLSGDAELYNLIHMSIREDAPNNLNDGGIIKYEFHPKIAQLNDLINNKKLHVEKLKDQYRKETRIESLKISHNNVLGFFIDITPKNVNKILDPKFIHRQTTINSVRYTTYELQNLENELVNAQTLVIRLEKELYTDICRKVIEKSSYLKILANSLSGLDVFCNFAYIADEYDYTKPEFTNDLSFDIVKGRHPVVEAALRKTSKSFVYNDCHLSEAERIWLITGPNMAGKSTYLRQNAIITIIAQIGSFVPAKSAKIGVVDKIFSRIGAADDLIKGQSTFMAEMLETSAILAQSTKNSLIILDEVGRGTSTYDGVSIAWSVLEYIHDKLQCRCLFATHYHELTVMKNFLPALQNYTIAIEESGKDILFLHNIILGASNKSYGLHVAALAGLPTSVINRAAQILLKFEKISISKEKNILSNASNNLSLFNFEHEKPISNSKLDEEFKTIDPDKISPKEALELIYKFKKLV</sequence>
<protein>
    <recommendedName>
        <fullName>DNA mismatch repair protein MutS</fullName>
    </recommendedName>
</protein>
<name>MUTS_RICPR</name>
<accession>Q9ZDM9</accession>
<feature type="chain" id="PRO_0000115130" description="DNA mismatch repair protein MutS">
    <location>
        <begin position="1"/>
        <end position="891"/>
    </location>
</feature>
<feature type="binding site" evidence="2">
    <location>
        <begin position="646"/>
        <end position="653"/>
    </location>
    <ligand>
        <name>ATP</name>
        <dbReference type="ChEBI" id="CHEBI:30616"/>
    </ligand>
</feature>
<organism>
    <name type="scientific">Rickettsia prowazekii (strain Madrid E)</name>
    <dbReference type="NCBI Taxonomy" id="272947"/>
    <lineage>
        <taxon>Bacteria</taxon>
        <taxon>Pseudomonadati</taxon>
        <taxon>Pseudomonadota</taxon>
        <taxon>Alphaproteobacteria</taxon>
        <taxon>Rickettsiales</taxon>
        <taxon>Rickettsiaceae</taxon>
        <taxon>Rickettsieae</taxon>
        <taxon>Rickettsia</taxon>
        <taxon>typhus group</taxon>
    </lineage>
</organism>
<comment type="function">
    <text evidence="1">This protein is involved in the repair of mismatches in DNA. It is possible that it carries out the mismatch recognition step. This protein has a weak ATPase activity (By similarity).</text>
</comment>
<comment type="similarity">
    <text evidence="3">Belongs to the DNA mismatch repair MutS family.</text>
</comment>
<keyword id="KW-0067">ATP-binding</keyword>
<keyword id="KW-0227">DNA damage</keyword>
<keyword id="KW-0234">DNA repair</keyword>
<keyword id="KW-0238">DNA-binding</keyword>
<keyword id="KW-0547">Nucleotide-binding</keyword>
<keyword id="KW-1185">Reference proteome</keyword>
<evidence type="ECO:0000250" key="1"/>
<evidence type="ECO:0000255" key="2"/>
<evidence type="ECO:0000305" key="3"/>
<proteinExistence type="inferred from homology"/>